<comment type="function">
    <text evidence="1">Catalyzes the conversion of (8S)-3',8-cyclo-7,8-dihydroguanosine 5'-triphosphate to cyclic pyranopterin monophosphate (cPMP).</text>
</comment>
<comment type="catalytic activity">
    <reaction evidence="1">
        <text>(8S)-3',8-cyclo-7,8-dihydroguanosine 5'-triphosphate = cyclic pyranopterin phosphate + diphosphate</text>
        <dbReference type="Rhea" id="RHEA:49580"/>
        <dbReference type="ChEBI" id="CHEBI:33019"/>
        <dbReference type="ChEBI" id="CHEBI:59648"/>
        <dbReference type="ChEBI" id="CHEBI:131766"/>
        <dbReference type="EC" id="4.6.1.17"/>
    </reaction>
</comment>
<comment type="pathway">
    <text evidence="1">Cofactor biosynthesis; molybdopterin biosynthesis.</text>
</comment>
<comment type="subunit">
    <text evidence="1">Homohexamer; trimer of dimers.</text>
</comment>
<comment type="similarity">
    <text evidence="1">Belongs to the MoaC family.</text>
</comment>
<organism>
    <name type="scientific">Shewanella loihica (strain ATCC BAA-1088 / PV-4)</name>
    <dbReference type="NCBI Taxonomy" id="323850"/>
    <lineage>
        <taxon>Bacteria</taxon>
        <taxon>Pseudomonadati</taxon>
        <taxon>Pseudomonadota</taxon>
        <taxon>Gammaproteobacteria</taxon>
        <taxon>Alteromonadales</taxon>
        <taxon>Shewanellaceae</taxon>
        <taxon>Shewanella</taxon>
    </lineage>
</organism>
<proteinExistence type="inferred from homology"/>
<gene>
    <name evidence="1" type="primary">moaC</name>
    <name type="ordered locus">Shew_0089</name>
</gene>
<dbReference type="EC" id="4.6.1.17" evidence="1"/>
<dbReference type="EMBL" id="CP000606">
    <property type="protein sequence ID" value="ABO21961.1"/>
    <property type="molecule type" value="Genomic_DNA"/>
</dbReference>
<dbReference type="RefSeq" id="WP_011863898.1">
    <property type="nucleotide sequence ID" value="NC_009092.1"/>
</dbReference>
<dbReference type="SMR" id="A3Q913"/>
<dbReference type="STRING" id="323850.Shew_0089"/>
<dbReference type="KEGG" id="slo:Shew_0089"/>
<dbReference type="eggNOG" id="COG0315">
    <property type="taxonomic scope" value="Bacteria"/>
</dbReference>
<dbReference type="HOGENOM" id="CLU_074693_1_1_6"/>
<dbReference type="OrthoDB" id="9794429at2"/>
<dbReference type="UniPathway" id="UPA00344"/>
<dbReference type="Proteomes" id="UP000001558">
    <property type="component" value="Chromosome"/>
</dbReference>
<dbReference type="GO" id="GO:0061799">
    <property type="term" value="F:cyclic pyranopterin monophosphate synthase activity"/>
    <property type="evidence" value="ECO:0007669"/>
    <property type="project" value="UniProtKB-UniRule"/>
</dbReference>
<dbReference type="GO" id="GO:0061798">
    <property type="term" value="F:GTP 3',8'-cyclase activity"/>
    <property type="evidence" value="ECO:0007669"/>
    <property type="project" value="TreeGrafter"/>
</dbReference>
<dbReference type="GO" id="GO:0006777">
    <property type="term" value="P:Mo-molybdopterin cofactor biosynthetic process"/>
    <property type="evidence" value="ECO:0007669"/>
    <property type="project" value="UniProtKB-UniRule"/>
</dbReference>
<dbReference type="CDD" id="cd01420">
    <property type="entry name" value="MoaC_PE"/>
    <property type="match status" value="1"/>
</dbReference>
<dbReference type="FunFam" id="3.30.70.640:FF:000001">
    <property type="entry name" value="Cyclic pyranopterin monophosphate synthase"/>
    <property type="match status" value="1"/>
</dbReference>
<dbReference type="Gene3D" id="3.30.70.640">
    <property type="entry name" value="Molybdopterin cofactor biosynthesis C (MoaC) domain"/>
    <property type="match status" value="1"/>
</dbReference>
<dbReference type="HAMAP" id="MF_01224_B">
    <property type="entry name" value="MoaC_B"/>
    <property type="match status" value="1"/>
</dbReference>
<dbReference type="InterPro" id="IPR023045">
    <property type="entry name" value="MoaC"/>
</dbReference>
<dbReference type="InterPro" id="IPR047594">
    <property type="entry name" value="MoaC_bact/euk"/>
</dbReference>
<dbReference type="InterPro" id="IPR036522">
    <property type="entry name" value="MoaC_sf"/>
</dbReference>
<dbReference type="InterPro" id="IPR050105">
    <property type="entry name" value="MoCo_biosynth_MoaA/MoaC"/>
</dbReference>
<dbReference type="InterPro" id="IPR002820">
    <property type="entry name" value="Mopterin_CF_biosynth-C_dom"/>
</dbReference>
<dbReference type="NCBIfam" id="TIGR00581">
    <property type="entry name" value="moaC"/>
    <property type="match status" value="1"/>
</dbReference>
<dbReference type="NCBIfam" id="NF006870">
    <property type="entry name" value="PRK09364.1"/>
    <property type="match status" value="1"/>
</dbReference>
<dbReference type="PANTHER" id="PTHR22960:SF0">
    <property type="entry name" value="MOLYBDENUM COFACTOR BIOSYNTHESIS PROTEIN 1"/>
    <property type="match status" value="1"/>
</dbReference>
<dbReference type="PANTHER" id="PTHR22960">
    <property type="entry name" value="MOLYBDOPTERIN COFACTOR SYNTHESIS PROTEIN A"/>
    <property type="match status" value="1"/>
</dbReference>
<dbReference type="Pfam" id="PF01967">
    <property type="entry name" value="MoaC"/>
    <property type="match status" value="1"/>
</dbReference>
<dbReference type="SUPFAM" id="SSF55040">
    <property type="entry name" value="Molybdenum cofactor biosynthesis protein C, MoaC"/>
    <property type="match status" value="1"/>
</dbReference>
<evidence type="ECO:0000255" key="1">
    <source>
        <dbReference type="HAMAP-Rule" id="MF_01224"/>
    </source>
</evidence>
<sequence>MSSEFTHINADGNAHMVDVTEKAVTEREARAEAFIEMAPETLEMIMSGSHHKGDVFATARIAGIQAAKKTSDLIPLCHPLMLTKVEVDLEAQPAHHRVRITSLCKLSGKTGVEMEALTAASVAALTIYDMCKAVQKDMVISQTRLLEKRGGKSGHFKV</sequence>
<name>MOAC_SHELP</name>
<protein>
    <recommendedName>
        <fullName evidence="1">Cyclic pyranopterin monophosphate synthase</fullName>
        <ecNumber evidence="1">4.6.1.17</ecNumber>
    </recommendedName>
    <alternativeName>
        <fullName evidence="1">Molybdenum cofactor biosynthesis protein C</fullName>
    </alternativeName>
</protein>
<feature type="chain" id="PRO_1000054137" description="Cyclic pyranopterin monophosphate synthase">
    <location>
        <begin position="1"/>
        <end position="158"/>
    </location>
</feature>
<feature type="active site" evidence="1">
    <location>
        <position position="129"/>
    </location>
</feature>
<feature type="binding site" evidence="1">
    <location>
        <begin position="76"/>
        <end position="78"/>
    </location>
    <ligand>
        <name>substrate</name>
    </ligand>
</feature>
<feature type="binding site" evidence="1">
    <location>
        <begin position="114"/>
        <end position="115"/>
    </location>
    <ligand>
        <name>substrate</name>
    </ligand>
</feature>
<keyword id="KW-0456">Lyase</keyword>
<keyword id="KW-0501">Molybdenum cofactor biosynthesis</keyword>
<keyword id="KW-1185">Reference proteome</keyword>
<accession>A3Q913</accession>
<reference key="1">
    <citation type="submission" date="2007-03" db="EMBL/GenBank/DDBJ databases">
        <title>Complete sequence of Shewanella loihica PV-4.</title>
        <authorList>
            <consortium name="US DOE Joint Genome Institute"/>
            <person name="Copeland A."/>
            <person name="Lucas S."/>
            <person name="Lapidus A."/>
            <person name="Barry K."/>
            <person name="Detter J.C."/>
            <person name="Glavina del Rio T."/>
            <person name="Hammon N."/>
            <person name="Israni S."/>
            <person name="Dalin E."/>
            <person name="Tice H."/>
            <person name="Pitluck S."/>
            <person name="Chain P."/>
            <person name="Malfatti S."/>
            <person name="Shin M."/>
            <person name="Vergez L."/>
            <person name="Schmutz J."/>
            <person name="Larimer F."/>
            <person name="Land M."/>
            <person name="Hauser L."/>
            <person name="Kyrpides N."/>
            <person name="Mikhailova N."/>
            <person name="Romine M.F."/>
            <person name="Serres G."/>
            <person name="Fredrickson J."/>
            <person name="Tiedje J."/>
            <person name="Richardson P."/>
        </authorList>
    </citation>
    <scope>NUCLEOTIDE SEQUENCE [LARGE SCALE GENOMIC DNA]</scope>
    <source>
        <strain>ATCC BAA-1088 / PV-4</strain>
    </source>
</reference>